<name>PGAM5_HUMAN</name>
<sequence>MAFRQALQLAACGLAGGSAAVLFSAVAVGKPRAGGDAEPRPAEPPAWAGGARPGPGVWDPNWDRREPLSLINVRKRNVESGEEELASKLDHYKAKATRHIFLIRHSQYHVDGSLEKDRTLTPLGREQAELTGLRLASLGLKFNKIVHSSMTRAIETTDIISRHLPGVCKVSTDLLREGAPIEPDPPVSHWKPEAVQYYEDGARIEAAFRNYIHRADARQEEDSYEIFICHANVIRYIVCRALQFPPEGWLRLSLNNGSITHLVIRPNGRVALRTLGDTGFMPPDKITRS</sequence>
<keyword id="KW-0002">3D-structure</keyword>
<keyword id="KW-0007">Acetylation</keyword>
<keyword id="KW-0025">Alternative splicing</keyword>
<keyword id="KW-0903">Direct protein sequencing</keyword>
<keyword id="KW-0378">Hydrolase</keyword>
<keyword id="KW-0472">Membrane</keyword>
<keyword id="KW-0496">Mitochondrion</keyword>
<keyword id="KW-0999">Mitochondrion inner membrane</keyword>
<keyword id="KW-1000">Mitochondrion outer membrane</keyword>
<keyword id="KW-1210">Necrosis</keyword>
<keyword id="KW-0597">Phosphoprotein</keyword>
<keyword id="KW-1267">Proteomics identification</keyword>
<keyword id="KW-1185">Reference proteome</keyword>
<keyword id="KW-0812">Transmembrane</keyword>
<keyword id="KW-1133">Transmembrane helix</keyword>
<protein>
    <recommendedName>
        <fullName>Serine/threonine-protein phosphatase PGAM5, mitochondrial</fullName>
        <ecNumber evidence="5">3.1.3.16</ecNumber>
    </recommendedName>
    <alternativeName>
        <fullName>Bcl-XL-binding protein v68</fullName>
    </alternativeName>
    <alternativeName>
        <fullName>Phosphoglycerate mutase family member 5</fullName>
    </alternativeName>
</protein>
<proteinExistence type="evidence at protein level"/>
<reference key="1">
    <citation type="journal article" date="2006" name="J. Biol. Chem.">
        <title>PGAM5, a Bcl-XL-interacting protein, is a novel substrate for the redox-regulated Keap1-dependent ubiquitin ligase complex.</title>
        <authorList>
            <person name="Lo S.-C."/>
            <person name="Hannink M."/>
        </authorList>
    </citation>
    <scope>NUCLEOTIDE SEQUENCE [MRNA]</scope>
    <scope>IDENTIFICATION BY MASS SPECTROMETRY</scope>
    <scope>ALTERNATIVE SPLICING</scope>
    <scope>SUBUNIT</scope>
    <scope>INTERACTION WITH BCL2L1 AND KEAP1</scope>
    <scope>MUTAGENESIS OF GLU-79 AND SER-80</scope>
</reference>
<reference key="2">
    <citation type="journal article" date="2006" name="Nature">
        <title>The finished DNA sequence of human chromosome 12.</title>
        <authorList>
            <person name="Scherer S.E."/>
            <person name="Muzny D.M."/>
            <person name="Buhay C.J."/>
            <person name="Chen R."/>
            <person name="Cree A."/>
            <person name="Ding Y."/>
            <person name="Dugan-Rocha S."/>
            <person name="Gill R."/>
            <person name="Gunaratne P."/>
            <person name="Harris R.A."/>
            <person name="Hawes A.C."/>
            <person name="Hernandez J."/>
            <person name="Hodgson A.V."/>
            <person name="Hume J."/>
            <person name="Jackson A."/>
            <person name="Khan Z.M."/>
            <person name="Kovar-Smith C."/>
            <person name="Lewis L.R."/>
            <person name="Lozado R.J."/>
            <person name="Metzker M.L."/>
            <person name="Milosavljevic A."/>
            <person name="Miner G.R."/>
            <person name="Montgomery K.T."/>
            <person name="Morgan M.B."/>
            <person name="Nazareth L.V."/>
            <person name="Scott G."/>
            <person name="Sodergren E."/>
            <person name="Song X.-Z."/>
            <person name="Steffen D."/>
            <person name="Lovering R.C."/>
            <person name="Wheeler D.A."/>
            <person name="Worley K.C."/>
            <person name="Yuan Y."/>
            <person name="Zhang Z."/>
            <person name="Adams C.Q."/>
            <person name="Ansari-Lari M.A."/>
            <person name="Ayele M."/>
            <person name="Brown M.J."/>
            <person name="Chen G."/>
            <person name="Chen Z."/>
            <person name="Clerc-Blankenburg K.P."/>
            <person name="Davis C."/>
            <person name="Delgado O."/>
            <person name="Dinh H.H."/>
            <person name="Draper H."/>
            <person name="Gonzalez-Garay M.L."/>
            <person name="Havlak P."/>
            <person name="Jackson L.R."/>
            <person name="Jacob L.S."/>
            <person name="Kelly S.H."/>
            <person name="Li L."/>
            <person name="Li Z."/>
            <person name="Liu J."/>
            <person name="Liu W."/>
            <person name="Lu J."/>
            <person name="Maheshwari M."/>
            <person name="Nguyen B.-V."/>
            <person name="Okwuonu G.O."/>
            <person name="Pasternak S."/>
            <person name="Perez L.M."/>
            <person name="Plopper F.J.H."/>
            <person name="Santibanez J."/>
            <person name="Shen H."/>
            <person name="Tabor P.E."/>
            <person name="Verduzco D."/>
            <person name="Waldron L."/>
            <person name="Wang Q."/>
            <person name="Williams G.A."/>
            <person name="Zhang J."/>
            <person name="Zhou J."/>
            <person name="Allen C.C."/>
            <person name="Amin A.G."/>
            <person name="Anyalebechi V."/>
            <person name="Bailey M."/>
            <person name="Barbaria J.A."/>
            <person name="Bimage K.E."/>
            <person name="Bryant N.P."/>
            <person name="Burch P.E."/>
            <person name="Burkett C.E."/>
            <person name="Burrell K.L."/>
            <person name="Calderon E."/>
            <person name="Cardenas V."/>
            <person name="Carter K."/>
            <person name="Casias K."/>
            <person name="Cavazos I."/>
            <person name="Cavazos S.R."/>
            <person name="Ceasar H."/>
            <person name="Chacko J."/>
            <person name="Chan S.N."/>
            <person name="Chavez D."/>
            <person name="Christopoulos C."/>
            <person name="Chu J."/>
            <person name="Cockrell R."/>
            <person name="Cox C.D."/>
            <person name="Dang M."/>
            <person name="Dathorne S.R."/>
            <person name="David R."/>
            <person name="Davis C.M."/>
            <person name="Davy-Carroll L."/>
            <person name="Deshazo D.R."/>
            <person name="Donlin J.E."/>
            <person name="D'Souza L."/>
            <person name="Eaves K.A."/>
            <person name="Egan A."/>
            <person name="Emery-Cohen A.J."/>
            <person name="Escotto M."/>
            <person name="Flagg N."/>
            <person name="Forbes L.D."/>
            <person name="Gabisi A.M."/>
            <person name="Garza M."/>
            <person name="Hamilton C."/>
            <person name="Henderson N."/>
            <person name="Hernandez O."/>
            <person name="Hines S."/>
            <person name="Hogues M.E."/>
            <person name="Huang M."/>
            <person name="Idlebird D.G."/>
            <person name="Johnson R."/>
            <person name="Jolivet A."/>
            <person name="Jones S."/>
            <person name="Kagan R."/>
            <person name="King L.M."/>
            <person name="Leal B."/>
            <person name="Lebow H."/>
            <person name="Lee S."/>
            <person name="LeVan J.M."/>
            <person name="Lewis L.C."/>
            <person name="London P."/>
            <person name="Lorensuhewa L.M."/>
            <person name="Loulseged H."/>
            <person name="Lovett D.A."/>
            <person name="Lucier A."/>
            <person name="Lucier R.L."/>
            <person name="Ma J."/>
            <person name="Madu R.C."/>
            <person name="Mapua P."/>
            <person name="Martindale A.D."/>
            <person name="Martinez E."/>
            <person name="Massey E."/>
            <person name="Mawhiney S."/>
            <person name="Meador M.G."/>
            <person name="Mendez S."/>
            <person name="Mercado C."/>
            <person name="Mercado I.C."/>
            <person name="Merritt C.E."/>
            <person name="Miner Z.L."/>
            <person name="Minja E."/>
            <person name="Mitchell T."/>
            <person name="Mohabbat F."/>
            <person name="Mohabbat K."/>
            <person name="Montgomery B."/>
            <person name="Moore N."/>
            <person name="Morris S."/>
            <person name="Munidasa M."/>
            <person name="Ngo R.N."/>
            <person name="Nguyen N.B."/>
            <person name="Nickerson E."/>
            <person name="Nwaokelemeh O.O."/>
            <person name="Nwokenkwo S."/>
            <person name="Obregon M."/>
            <person name="Oguh M."/>
            <person name="Oragunye N."/>
            <person name="Oviedo R.J."/>
            <person name="Parish B.J."/>
            <person name="Parker D.N."/>
            <person name="Parrish J."/>
            <person name="Parks K.L."/>
            <person name="Paul H.A."/>
            <person name="Payton B.A."/>
            <person name="Perez A."/>
            <person name="Perrin W."/>
            <person name="Pickens A."/>
            <person name="Primus E.L."/>
            <person name="Pu L.-L."/>
            <person name="Puazo M."/>
            <person name="Quiles M.M."/>
            <person name="Quiroz J.B."/>
            <person name="Rabata D."/>
            <person name="Reeves K."/>
            <person name="Ruiz S.J."/>
            <person name="Shao H."/>
            <person name="Sisson I."/>
            <person name="Sonaike T."/>
            <person name="Sorelle R.P."/>
            <person name="Sutton A.E."/>
            <person name="Svatek A.F."/>
            <person name="Svetz L.A."/>
            <person name="Tamerisa K.S."/>
            <person name="Taylor T.R."/>
            <person name="Teague B."/>
            <person name="Thomas N."/>
            <person name="Thorn R.D."/>
            <person name="Trejos Z.Y."/>
            <person name="Trevino B.K."/>
            <person name="Ukegbu O.N."/>
            <person name="Urban J.B."/>
            <person name="Vasquez L.I."/>
            <person name="Vera V.A."/>
            <person name="Villasana D.M."/>
            <person name="Wang L."/>
            <person name="Ward-Moore S."/>
            <person name="Warren J.T."/>
            <person name="Wei X."/>
            <person name="White F."/>
            <person name="Williamson A.L."/>
            <person name="Wleczyk R."/>
            <person name="Wooden H.S."/>
            <person name="Wooden S.H."/>
            <person name="Yen J."/>
            <person name="Yoon L."/>
            <person name="Yoon V."/>
            <person name="Zorrilla S.E."/>
            <person name="Nelson D."/>
            <person name="Kucherlapati R."/>
            <person name="Weinstock G."/>
            <person name="Gibbs R.A."/>
        </authorList>
    </citation>
    <scope>NUCLEOTIDE SEQUENCE [LARGE SCALE GENOMIC DNA]</scope>
</reference>
<reference key="3">
    <citation type="journal article" date="2004" name="Genome Res.">
        <title>The status, quality, and expansion of the NIH full-length cDNA project: the Mammalian Gene Collection (MGC).</title>
        <authorList>
            <consortium name="The MGC Project Team"/>
        </authorList>
    </citation>
    <scope>NUCLEOTIDE SEQUENCE [LARGE SCALE MRNA] (ISOFORM 2)</scope>
    <source>
        <tissue>Cervix</tissue>
    </source>
</reference>
<reference key="4">
    <citation type="journal article" date="2001" name="J. Biol. Chem.">
        <title>In vitro selection and characterization of Bcl-X(L)-binding proteins from a mix of tissue-specific mRNA display libraries.</title>
        <authorList>
            <person name="Hammond P.W."/>
            <person name="Alpin J."/>
            <person name="Rise C.E."/>
            <person name="Wright M."/>
            <person name="Kreider B.L."/>
        </authorList>
    </citation>
    <scope>NUCLEOTIDE SEQUENCE [MRNA] OF 124-157</scope>
    <source>
        <tissue>Kidney</tissue>
    </source>
</reference>
<reference key="5">
    <citation type="journal article" date="2012" name="J. Biol. Chem.">
        <title>Rhomboid protease PARL mediates the mitochondrial membrane potential loss-induced cleavage of PGAM5.</title>
        <authorList>
            <person name="Sekine S."/>
            <person name="Kanamaru Y."/>
            <person name="Koike M."/>
            <person name="Nishihara A."/>
            <person name="Okada M."/>
            <person name="Kinoshita H."/>
            <person name="Kamiyama M."/>
            <person name="Maruyama J."/>
            <person name="Uchiyama Y."/>
            <person name="Ishihara N."/>
            <person name="Takeda K."/>
            <person name="Ichijo H."/>
        </authorList>
    </citation>
    <scope>PROTEIN SEQUENCE OF 25-29</scope>
    <scope>SUBCELLULAR LOCATION</scope>
    <scope>PROTEOLYTIC CLEAVAGE</scope>
    <scope>TOPOLOGY</scope>
    <scope>MUTAGENESIS OF SER-24</scope>
</reference>
<reference key="6">
    <citation type="journal article" date="2008" name="Exp. Cell Res.">
        <title>PGAM5 tethers a ternary complex containing Keap1 and Nrf2 to mitochondria.</title>
        <authorList>
            <person name="Lo S.-C."/>
            <person name="Hannink M."/>
        </authorList>
    </citation>
    <scope>IDENTIFICATION BY MASS SPECTROMETRY</scope>
    <scope>SUBUNIT</scope>
    <scope>INTERACTION WITH NFE2L2 AND KEAP1</scope>
    <scope>FUNCTION</scope>
    <scope>SUBCELLULAR LOCATION</scope>
</reference>
<reference key="7">
    <citation type="journal article" date="2009" name="Proc. Natl. Acad. Sci. U.S.A.">
        <title>Mitochondrial phosphoglycerate mutase 5 uses alternate catalytic activity as a protein serine/threonine phosphatase to activate ASK1.</title>
        <authorList>
            <person name="Takeda K."/>
            <person name="Komuro Y."/>
            <person name="Hayakawa T."/>
            <person name="Oguchi H."/>
            <person name="Ishida Y."/>
            <person name="Murakami S."/>
            <person name="Noguchi T."/>
            <person name="Kinoshita H."/>
            <person name="Sekine Y."/>
            <person name="Iemura S."/>
            <person name="Natsume T."/>
            <person name="Ichijo H."/>
        </authorList>
    </citation>
    <scope>FUNCTION</scope>
    <scope>CATALYTIC ACTIVITY</scope>
    <scope>INTERACTION WITH MAP3K5</scope>
    <scope>MUTAGENESIS OF HIS-105</scope>
</reference>
<reference key="8">
    <citation type="journal article" date="2009" name="Science">
        <title>Lysine acetylation targets protein complexes and co-regulates major cellular functions.</title>
        <authorList>
            <person name="Choudhary C."/>
            <person name="Kumar C."/>
            <person name="Gnad F."/>
            <person name="Nielsen M.L."/>
            <person name="Rehman M."/>
            <person name="Walther T.C."/>
            <person name="Olsen J.V."/>
            <person name="Mann M."/>
        </authorList>
    </citation>
    <scope>ACETYLATION [LARGE SCALE ANALYSIS] AT LYS-116; LYS-144 AND LYS-191</scope>
    <scope>IDENTIFICATION BY MASS SPECTROMETRY [LARGE SCALE ANALYSIS]</scope>
</reference>
<reference key="9">
    <citation type="journal article" date="2011" name="BMC Syst. Biol.">
        <title>Initial characterization of the human central proteome.</title>
        <authorList>
            <person name="Burkard T.R."/>
            <person name="Planyavsky M."/>
            <person name="Kaupe I."/>
            <person name="Breitwieser F.P."/>
            <person name="Buerckstuemmer T."/>
            <person name="Bennett K.L."/>
            <person name="Superti-Furga G."/>
            <person name="Colinge J."/>
        </authorList>
    </citation>
    <scope>IDENTIFICATION BY MASS SPECTROMETRY [LARGE SCALE ANALYSIS]</scope>
</reference>
<reference key="10">
    <citation type="journal article" date="2011" name="Sci. Signal.">
        <title>System-wide temporal characterization of the proteome and phosphoproteome of human embryonic stem cell differentiation.</title>
        <authorList>
            <person name="Rigbolt K.T."/>
            <person name="Prokhorova T.A."/>
            <person name="Akimov V."/>
            <person name="Henningsen J."/>
            <person name="Johansen P.T."/>
            <person name="Kratchmarova I."/>
            <person name="Kassem M."/>
            <person name="Mann M."/>
            <person name="Olsen J.V."/>
            <person name="Blagoev B."/>
        </authorList>
    </citation>
    <scope>PHOSPHORYLATION [LARGE SCALE ANALYSIS] AT SER-80</scope>
    <scope>IDENTIFICATION BY MASS SPECTROMETRY [LARGE SCALE ANALYSIS]</scope>
</reference>
<reference key="11">
    <citation type="journal article" date="2012" name="Cell">
        <title>The mitochondrial phosphatase PGAM5 functions at the convergence point of multiple necrotic death pathways.</title>
        <authorList>
            <person name="Wang Z."/>
            <person name="Jiang H."/>
            <person name="Chen S."/>
            <person name="Du F."/>
            <person name="Wang X."/>
        </authorList>
    </citation>
    <scope>FUNCTION</scope>
    <scope>IDENTIFICATION IN COMPLEX WITH RIPK1; RIPK3 AND MLKL</scope>
    <scope>INTERACTION WITH DNM1L</scope>
</reference>
<reference key="12">
    <citation type="journal article" date="2013" name="J. Proteome Res.">
        <title>Toward a comprehensive characterization of a human cancer cell phosphoproteome.</title>
        <authorList>
            <person name="Zhou H."/>
            <person name="Di Palma S."/>
            <person name="Preisinger C."/>
            <person name="Peng M."/>
            <person name="Polat A.N."/>
            <person name="Heck A.J."/>
            <person name="Mohammed S."/>
        </authorList>
    </citation>
    <scope>PHOSPHORYLATION [LARGE SCALE ANALYSIS] AT SER-80 AND SER-87</scope>
    <scope>IDENTIFICATION BY MASS SPECTROMETRY [LARGE SCALE ANALYSIS]</scope>
    <source>
        <tissue>Erythroleukemia</tissue>
    </source>
</reference>
<reference key="13">
    <citation type="journal article" date="2014" name="Mol. Cell">
        <title>A regulatory signaling loop comprising the PGAM5 phosphatase and CK2 controls receptor-mediated mitophagy.</title>
        <authorList>
            <person name="Chen G."/>
            <person name="Han Z."/>
            <person name="Feng D."/>
            <person name="Chen Y."/>
            <person name="Chen L."/>
            <person name="Wu H."/>
            <person name="Huang L."/>
            <person name="Zhou C."/>
            <person name="Cai X."/>
            <person name="Fu C."/>
            <person name="Duan L."/>
            <person name="Wang X."/>
            <person name="Liu L."/>
            <person name="Liu X."/>
            <person name="Shen Y."/>
            <person name="Zhu Y."/>
            <person name="Chen Q."/>
        </authorList>
    </citation>
    <scope>FUNCTION</scope>
    <scope>SUBCELLULAR LOCATION</scope>
</reference>
<reference key="14">
    <citation type="journal article" date="2015" name="Proteomics">
        <title>N-terminome analysis of the human mitochondrial proteome.</title>
        <authorList>
            <person name="Vaca Jacome A.S."/>
            <person name="Rabilloud T."/>
            <person name="Schaeffer-Reiss C."/>
            <person name="Rompais M."/>
            <person name="Ayoub D."/>
            <person name="Lane L."/>
            <person name="Bairoch A."/>
            <person name="Van Dorsselaer A."/>
            <person name="Carapito C."/>
        </authorList>
    </citation>
    <scope>IDENTIFICATION BY MASS SPECTROMETRY [LARGE SCALE ANALYSIS]</scope>
</reference>
<reference key="15">
    <citation type="journal article" date="2020" name="Nat. Commun.">
        <title>Mitochondrial phosphatase PGAM5 modulates cellular senescence by regulating mitochondrial dynamics.</title>
        <authorList>
            <person name="Yu B."/>
            <person name="Ma J."/>
            <person name="Li J."/>
            <person name="Wang D."/>
            <person name="Wang Z."/>
            <person name="Wang S."/>
        </authorList>
    </citation>
    <scope>FUNCTION</scope>
</reference>
<reference key="16">
    <citation type="journal article" date="2023" name="Cell Rep.">
        <title>PGAM5 is an MFN2 phosphatase that plays an essential role in the regulation of mitochondrial dynamics.</title>
        <authorList>
            <person name="Nag S."/>
            <person name="Szederkenyi K."/>
            <person name="Gorbenko O."/>
            <person name="Tyrrell H."/>
            <person name="Yip C.M."/>
            <person name="McQuibban G.A."/>
        </authorList>
    </citation>
    <scope>FUNCTION</scope>
    <scope>MUTAGENESIS OF HIS-105</scope>
    <scope>SUBCELLULAR LOCATION</scope>
</reference>
<reference key="17">
    <citation type="submission" date="2010-09" db="PDB data bank">
        <title>Crystal structure of human phosphoglycerate mutase family member 5 (PGAM5).</title>
        <authorList>
            <consortium name="Structural genomics consortium (SGC)"/>
        </authorList>
    </citation>
    <scope>X-RAY CRYSTALLOGRAPHY (1.7 ANGSTROMS) OF 90-289</scope>
</reference>
<accession>Q96HS1</accession>
<accession>A9LN06</accession>
<accession>C9IZY7</accession>
<accession>Q96JB0</accession>
<dbReference type="EC" id="3.1.3.16" evidence="5"/>
<dbReference type="EMBL" id="EU249757">
    <property type="protein sequence ID" value="ABX39494.1"/>
    <property type="molecule type" value="mRNA"/>
</dbReference>
<dbReference type="EMBL" id="AC135586">
    <property type="status" value="NOT_ANNOTATED_CDS"/>
    <property type="molecule type" value="Genomic_DNA"/>
</dbReference>
<dbReference type="EMBL" id="BC008196">
    <property type="protein sequence ID" value="AAH08196.1"/>
    <property type="molecule type" value="mRNA"/>
</dbReference>
<dbReference type="EMBL" id="AF357523">
    <property type="protein sequence ID" value="AAK60627.1"/>
    <property type="molecule type" value="mRNA"/>
</dbReference>
<dbReference type="CCDS" id="CCDS53845.1">
    <molecule id="Q96HS1-1"/>
</dbReference>
<dbReference type="CCDS" id="CCDS9280.1">
    <molecule id="Q96HS1-2"/>
</dbReference>
<dbReference type="RefSeq" id="NP_001164014.1">
    <molecule id="Q96HS1-1"/>
    <property type="nucleotide sequence ID" value="NM_001170543.2"/>
</dbReference>
<dbReference type="RefSeq" id="NP_612642.2">
    <molecule id="Q96HS1-2"/>
    <property type="nucleotide sequence ID" value="NM_138575.4"/>
</dbReference>
<dbReference type="PDB" id="3MXO">
    <property type="method" value="X-ray"/>
    <property type="resolution" value="1.70 A"/>
    <property type="chains" value="A/B=90-289"/>
</dbReference>
<dbReference type="PDB" id="3O0T">
    <property type="method" value="X-ray"/>
    <property type="resolution" value="1.90 A"/>
    <property type="chains" value="A/B=90-289"/>
</dbReference>
<dbReference type="PDB" id="5MUF">
    <property type="method" value="X-ray"/>
    <property type="resolution" value="3.10 A"/>
    <property type="chains" value="A/B/C=54-289"/>
</dbReference>
<dbReference type="PDB" id="6CNI">
    <property type="method" value="X-ray"/>
    <property type="resolution" value="1.70 A"/>
    <property type="chains" value="A/B=90-289"/>
</dbReference>
<dbReference type="PDB" id="6CNL">
    <property type="method" value="X-ray"/>
    <property type="resolution" value="2.60 A"/>
    <property type="chains" value="A/B/C/D/E/F/G/H/I/J/K/L=90-289"/>
</dbReference>
<dbReference type="PDB" id="7QAL">
    <property type="method" value="NMR"/>
    <property type="chains" value="A=2-36"/>
</dbReference>
<dbReference type="PDB" id="7QAM">
    <property type="method" value="NMR"/>
    <property type="chains" value="A=2-36"/>
</dbReference>
<dbReference type="PDB" id="7QAO">
    <property type="method" value="NMR"/>
    <property type="chains" value="A=2-36"/>
</dbReference>
<dbReference type="PDB" id="7QAP">
    <property type="method" value="NMR"/>
    <property type="chains" value="A=2-36"/>
</dbReference>
<dbReference type="PDB" id="8IN0">
    <property type="method" value="X-ray"/>
    <property type="resolution" value="1.80 A"/>
    <property type="chains" value="B=71-82"/>
</dbReference>
<dbReference type="PDBsum" id="3MXO"/>
<dbReference type="PDBsum" id="3O0T"/>
<dbReference type="PDBsum" id="5MUF"/>
<dbReference type="PDBsum" id="6CNI"/>
<dbReference type="PDBsum" id="6CNL"/>
<dbReference type="PDBsum" id="7QAL"/>
<dbReference type="PDBsum" id="7QAM"/>
<dbReference type="PDBsum" id="7QAO"/>
<dbReference type="PDBsum" id="7QAP"/>
<dbReference type="PDBsum" id="8IN0"/>
<dbReference type="SMR" id="Q96HS1"/>
<dbReference type="BioGRID" id="128154">
    <property type="interactions" value="282"/>
</dbReference>
<dbReference type="CORUM" id="Q96HS1"/>
<dbReference type="DIP" id="DIP-50735N"/>
<dbReference type="ELM" id="Q96HS1"/>
<dbReference type="FunCoup" id="Q96HS1">
    <property type="interactions" value="2233"/>
</dbReference>
<dbReference type="IntAct" id="Q96HS1">
    <property type="interactions" value="103"/>
</dbReference>
<dbReference type="MINT" id="Q96HS1"/>
<dbReference type="STRING" id="9606.ENSP00000438465"/>
<dbReference type="ChEMBL" id="CHEMBL4802013"/>
<dbReference type="DEPOD" id="PGAM5"/>
<dbReference type="GlyGen" id="Q96HS1">
    <property type="glycosylation" value="1 site, 1 O-linked glycan (1 site)"/>
</dbReference>
<dbReference type="iPTMnet" id="Q96HS1"/>
<dbReference type="PhosphoSitePlus" id="Q96HS1"/>
<dbReference type="SwissPalm" id="Q96HS1"/>
<dbReference type="BioMuta" id="PGAM5"/>
<dbReference type="DMDM" id="150417955"/>
<dbReference type="jPOST" id="Q96HS1"/>
<dbReference type="MassIVE" id="Q96HS1"/>
<dbReference type="PaxDb" id="9606-ENSP00000438465"/>
<dbReference type="PeptideAtlas" id="Q96HS1"/>
<dbReference type="ProteomicsDB" id="76781">
    <molecule id="Q96HS1-1"/>
</dbReference>
<dbReference type="ProteomicsDB" id="76782">
    <molecule id="Q96HS1-2"/>
</dbReference>
<dbReference type="Pumba" id="Q96HS1"/>
<dbReference type="TopDownProteomics" id="Q96HS1-1">
    <molecule id="Q96HS1-1"/>
</dbReference>
<dbReference type="TopDownProteomics" id="Q96HS1-2">
    <molecule id="Q96HS1-2"/>
</dbReference>
<dbReference type="Antibodypedia" id="49123">
    <property type="antibodies" value="56 antibodies from 17 providers"/>
</dbReference>
<dbReference type="DNASU" id="192111"/>
<dbReference type="Ensembl" id="ENST00000317555.6">
    <molecule id="Q96HS1-2"/>
    <property type="protein sequence ID" value="ENSP00000321503.2"/>
    <property type="gene ID" value="ENSG00000247077.8"/>
</dbReference>
<dbReference type="Ensembl" id="ENST00000498926.7">
    <molecule id="Q96HS1-1"/>
    <property type="protein sequence ID" value="ENSP00000438465.1"/>
    <property type="gene ID" value="ENSG00000247077.8"/>
</dbReference>
<dbReference type="GeneID" id="192111"/>
<dbReference type="KEGG" id="hsa:192111"/>
<dbReference type="MANE-Select" id="ENST00000498926.7">
    <property type="protein sequence ID" value="ENSP00000438465.1"/>
    <property type="RefSeq nucleotide sequence ID" value="NM_001170543.2"/>
    <property type="RefSeq protein sequence ID" value="NP_001164014.1"/>
</dbReference>
<dbReference type="UCSC" id="uc001uku.4">
    <molecule id="Q96HS1-1"/>
    <property type="organism name" value="human"/>
</dbReference>
<dbReference type="AGR" id="HGNC:28763"/>
<dbReference type="CTD" id="192111"/>
<dbReference type="DisGeNET" id="192111"/>
<dbReference type="GeneCards" id="PGAM5"/>
<dbReference type="HGNC" id="HGNC:28763">
    <property type="gene designation" value="PGAM5"/>
</dbReference>
<dbReference type="HPA" id="ENSG00000247077">
    <property type="expression patterns" value="Low tissue specificity"/>
</dbReference>
<dbReference type="MIM" id="614939">
    <property type="type" value="gene"/>
</dbReference>
<dbReference type="neXtProt" id="NX_Q96HS1"/>
<dbReference type="OpenTargets" id="ENSG00000247077"/>
<dbReference type="PharmGKB" id="PA143485574"/>
<dbReference type="VEuPathDB" id="HostDB:ENSG00000247077"/>
<dbReference type="eggNOG" id="KOG4609">
    <property type="taxonomic scope" value="Eukaryota"/>
</dbReference>
<dbReference type="GeneTree" id="ENSGT00390000004796"/>
<dbReference type="HOGENOM" id="CLU_063130_0_1_1"/>
<dbReference type="InParanoid" id="Q96HS1"/>
<dbReference type="OMA" id="QLPLFAW"/>
<dbReference type="OrthoDB" id="2118094at2759"/>
<dbReference type="PAN-GO" id="Q96HS1">
    <property type="GO annotations" value="4 GO annotations based on evolutionary models"/>
</dbReference>
<dbReference type="PhylomeDB" id="Q96HS1"/>
<dbReference type="TreeFam" id="TF314977"/>
<dbReference type="BRENDA" id="3.1.3.16">
    <property type="organism ID" value="2681"/>
</dbReference>
<dbReference type="PathwayCommons" id="Q96HS1"/>
<dbReference type="Reactome" id="R-HSA-8934903">
    <molecule id="Q96HS1-2"/>
    <property type="pathway name" value="Receptor Mediated Mitophagy"/>
</dbReference>
<dbReference type="Reactome" id="R-HSA-9861718">
    <molecule id="Q96HS1-1"/>
    <property type="pathway name" value="Regulation of pyruvate metabolism"/>
</dbReference>
<dbReference type="SignaLink" id="Q96HS1"/>
<dbReference type="SIGNOR" id="Q96HS1"/>
<dbReference type="BioGRID-ORCS" id="192111">
    <property type="hits" value="18 hits in 1169 CRISPR screens"/>
</dbReference>
<dbReference type="CD-CODE" id="232F8A39">
    <property type="entry name" value="P-body"/>
</dbReference>
<dbReference type="CD-CODE" id="DEE660B4">
    <property type="entry name" value="Stress granule"/>
</dbReference>
<dbReference type="ChiTaRS" id="PGAM5">
    <property type="organism name" value="human"/>
</dbReference>
<dbReference type="EvolutionaryTrace" id="Q96HS1"/>
<dbReference type="GenomeRNAi" id="192111"/>
<dbReference type="Pharos" id="Q96HS1">
    <property type="development level" value="Tbio"/>
</dbReference>
<dbReference type="PRO" id="PR:Q96HS1"/>
<dbReference type="Proteomes" id="UP000005640">
    <property type="component" value="Chromosome 12"/>
</dbReference>
<dbReference type="RNAct" id="Q96HS1">
    <property type="molecule type" value="protein"/>
</dbReference>
<dbReference type="Bgee" id="ENSG00000247077">
    <property type="expression patterns" value="Expressed in gastrocnemius and 103 other cell types or tissues"/>
</dbReference>
<dbReference type="ExpressionAtlas" id="Q96HS1">
    <property type="expression patterns" value="baseline and differential"/>
</dbReference>
<dbReference type="GO" id="GO:0005743">
    <property type="term" value="C:mitochondrial inner membrane"/>
    <property type="evidence" value="ECO:0007669"/>
    <property type="project" value="UniProtKB-SubCell"/>
</dbReference>
<dbReference type="GO" id="GO:0005741">
    <property type="term" value="C:mitochondrial outer membrane"/>
    <property type="evidence" value="ECO:0000304"/>
    <property type="project" value="Reactome"/>
</dbReference>
<dbReference type="GO" id="GO:0005739">
    <property type="term" value="C:mitochondrion"/>
    <property type="evidence" value="ECO:0000314"/>
    <property type="project" value="HPA"/>
</dbReference>
<dbReference type="GO" id="GO:0004722">
    <property type="term" value="F:protein serine/threonine phosphatase activity"/>
    <property type="evidence" value="ECO:0000314"/>
    <property type="project" value="CACAO"/>
</dbReference>
<dbReference type="GO" id="GO:0016236">
    <property type="term" value="P:macroautophagy"/>
    <property type="evidence" value="ECO:0000304"/>
    <property type="project" value="Reactome"/>
</dbReference>
<dbReference type="GO" id="GO:0070266">
    <property type="term" value="P:necroptotic process"/>
    <property type="evidence" value="ECO:0007669"/>
    <property type="project" value="Ensembl"/>
</dbReference>
<dbReference type="GO" id="GO:0120163">
    <property type="term" value="P:negative regulation of cold-induced thermogenesis"/>
    <property type="evidence" value="ECO:0000250"/>
    <property type="project" value="YuBioLab"/>
</dbReference>
<dbReference type="GO" id="GO:0090141">
    <property type="term" value="P:positive regulation of mitochondrial fission"/>
    <property type="evidence" value="ECO:0000318"/>
    <property type="project" value="GO_Central"/>
</dbReference>
<dbReference type="CDD" id="cd07067">
    <property type="entry name" value="HP_PGM_like"/>
    <property type="match status" value="1"/>
</dbReference>
<dbReference type="FunFam" id="3.40.50.1240:FF:000009">
    <property type="entry name" value="serine/threonine-protein phosphatase PGAM5, mitochondrial isoform X1"/>
    <property type="match status" value="1"/>
</dbReference>
<dbReference type="Gene3D" id="3.40.50.1240">
    <property type="entry name" value="Phosphoglycerate mutase-like"/>
    <property type="match status" value="1"/>
</dbReference>
<dbReference type="InterPro" id="IPR013078">
    <property type="entry name" value="His_Pase_superF_clade-1"/>
</dbReference>
<dbReference type="InterPro" id="IPR029033">
    <property type="entry name" value="His_PPase_superfam"/>
</dbReference>
<dbReference type="InterPro" id="IPR051021">
    <property type="entry name" value="Mito_Ser/Thr_phosphatase"/>
</dbReference>
<dbReference type="PANTHER" id="PTHR20935">
    <property type="entry name" value="PHOSPHOGLYCERATE MUTASE-RELATED"/>
    <property type="match status" value="1"/>
</dbReference>
<dbReference type="PANTHER" id="PTHR20935:SF0">
    <property type="entry name" value="SERINE_THREONINE-PROTEIN PHOSPHATASE PGAM5, MITOCHONDRIAL"/>
    <property type="match status" value="1"/>
</dbReference>
<dbReference type="Pfam" id="PF00300">
    <property type="entry name" value="His_Phos_1"/>
    <property type="match status" value="1"/>
</dbReference>
<dbReference type="SMART" id="SM00855">
    <property type="entry name" value="PGAM"/>
    <property type="match status" value="1"/>
</dbReference>
<dbReference type="SUPFAM" id="SSF53254">
    <property type="entry name" value="Phosphoglycerate mutase-like"/>
    <property type="match status" value="1"/>
</dbReference>
<comment type="function">
    <text evidence="4 5 6 8 9 10">Mitochondrial serine/threonine phosphatase that dephosphorylates various substrates and thus plays a role in different biological processes including cellular senescence or mitophagy (PubMed:24746696, PubMed:32439975). Modulates cellular senescence by regulating mitochondrial dynamics. Mechanistically, participates in mitochondrial fission through dephosphorylating DNM1L/DRP1 (PubMed:32439975). Additionally, dephosphorylates MFN2 in a stress-sensitive manner and consequently protects it from ubiquitination and degradation to promote mitochondrial network formation (PubMed:37498743). Regulates mitophagy independent of PARKIN by interacting with and dephosphorylating FUNDC1, which interacts with LC3 (PubMed:24746696). Regulates anti-oxidative response by forming a tertiary complex with KEAP1 and NRF2 (PubMed:18387606). Regulates necroptosis by acting as a RIPK3 target and recruiting the RIPK1-RIPK3-MLKL necrosis 'attack' complex to mitochondria (PubMed:22265414).</text>
</comment>
<comment type="catalytic activity">
    <reaction evidence="5">
        <text>O-phospho-L-seryl-[protein] + H2O = L-seryl-[protein] + phosphate</text>
        <dbReference type="Rhea" id="RHEA:20629"/>
        <dbReference type="Rhea" id="RHEA-COMP:9863"/>
        <dbReference type="Rhea" id="RHEA-COMP:11604"/>
        <dbReference type="ChEBI" id="CHEBI:15377"/>
        <dbReference type="ChEBI" id="CHEBI:29999"/>
        <dbReference type="ChEBI" id="CHEBI:43474"/>
        <dbReference type="ChEBI" id="CHEBI:83421"/>
        <dbReference type="EC" id="3.1.3.16"/>
    </reaction>
</comment>
<comment type="catalytic activity">
    <reaction evidence="5">
        <text>O-phospho-L-threonyl-[protein] + H2O = L-threonyl-[protein] + phosphate</text>
        <dbReference type="Rhea" id="RHEA:47004"/>
        <dbReference type="Rhea" id="RHEA-COMP:11060"/>
        <dbReference type="Rhea" id="RHEA-COMP:11605"/>
        <dbReference type="ChEBI" id="CHEBI:15377"/>
        <dbReference type="ChEBI" id="CHEBI:30013"/>
        <dbReference type="ChEBI" id="CHEBI:43474"/>
        <dbReference type="ChEBI" id="CHEBI:61977"/>
        <dbReference type="EC" id="3.1.3.16"/>
    </reaction>
</comment>
<comment type="subunit">
    <text evidence="3 4 5 6">Dimer. Forms a ternary complex with NFE2L2 and KEAP1. Interacts with BCL2L1 and MAP3K5. Upon TNF-induced necrosis, forms in complex with RIPK1, RIPK3 and MLKL; the formation of this complex leads to PGAM5 phosphorylation. Isoform 2, but not isoform 1, interacts with DNM1L; this interaction leads to DNM1L dephosphorylation and activation and eventually to mitochondria fragmentation.</text>
</comment>
<comment type="interaction">
    <interactant intactId="EBI-713608">
        <id>Q96HS1</id>
    </interactant>
    <interactant intactId="EBI-476263">
        <id>Q99683</id>
        <label>MAP3K5</label>
    </interactant>
    <organismsDiffer>false</organismsDiffer>
    <experiments>2</experiments>
</comment>
<comment type="subcellular location">
    <subcellularLocation>
        <location evidence="4">Mitochondrion outer membrane</location>
        <topology evidence="1">Single-pass membrane protein</topology>
    </subcellularLocation>
    <subcellularLocation>
        <location evidence="7 8 10">Mitochondrion inner membrane</location>
        <topology evidence="1">Single-pass membrane protein</topology>
    </subcellularLocation>
    <text>Isoform 2 overexpression results in the formation of disconnected punctuate mitochondria distributed throughout the cytoplasm. Isoform 1 overexpression results in the clustering of mitochondria around the nucleus.</text>
</comment>
<comment type="alternative products">
    <event type="alternative splicing"/>
    <isoform>
        <id>Q96HS1-1</id>
        <name>1</name>
        <name>PGAM5-L</name>
        <sequence type="displayed"/>
    </isoform>
    <isoform>
        <id>Q96HS1-2</id>
        <name>2</name>
        <name>PGAM5-S</name>
        <sequence type="described" ref="VSP_025761"/>
    </isoform>
</comment>
<comment type="domain">
    <text evidence="4">The N-terminal 35 amino acids, including the potential transmembrane alpha-helix, function as a non-cleaved mitochondrial targeting sequence that targets the protein to the cytosolic side of the outer mitochondrial membrane.</text>
</comment>
<comment type="PTM">
    <text>Both isoform 1 and isoform 2 are phosphorylated by the RIPK1/RIPK3 complex under necrotic conditions. This phosphorylation increases PGAM5 phosphatase activity.</text>
</comment>
<comment type="PTM">
    <text evidence="7">Proteolytically cleaved by PARL in response to loss of mitochondrial membrane potential.</text>
</comment>
<comment type="similarity">
    <text evidence="12">Belongs to the phosphoglycerate mutase family. BPG-dependent PGAM subfamily.</text>
</comment>
<evidence type="ECO:0000255" key="1"/>
<evidence type="ECO:0000256" key="2">
    <source>
        <dbReference type="SAM" id="MobiDB-lite"/>
    </source>
</evidence>
<evidence type="ECO:0000269" key="3">
    <source>
    </source>
</evidence>
<evidence type="ECO:0000269" key="4">
    <source>
    </source>
</evidence>
<evidence type="ECO:0000269" key="5">
    <source>
    </source>
</evidence>
<evidence type="ECO:0000269" key="6">
    <source>
    </source>
</evidence>
<evidence type="ECO:0000269" key="7">
    <source>
    </source>
</evidence>
<evidence type="ECO:0000269" key="8">
    <source>
    </source>
</evidence>
<evidence type="ECO:0000269" key="9">
    <source>
    </source>
</evidence>
<evidence type="ECO:0000269" key="10">
    <source>
    </source>
</evidence>
<evidence type="ECO:0000303" key="11">
    <source>
    </source>
</evidence>
<evidence type="ECO:0000305" key="12"/>
<evidence type="ECO:0000305" key="13">
    <source>
    </source>
</evidence>
<evidence type="ECO:0007744" key="14">
    <source>
    </source>
</evidence>
<evidence type="ECO:0007744" key="15">
    <source>
    </source>
</evidence>
<evidence type="ECO:0007744" key="16">
    <source>
    </source>
</evidence>
<evidence type="ECO:0007829" key="17">
    <source>
        <dbReference type="PDB" id="3MXO"/>
    </source>
</evidence>
<evidence type="ECO:0007829" key="18">
    <source>
        <dbReference type="PDB" id="7QAL"/>
    </source>
</evidence>
<organism>
    <name type="scientific">Homo sapiens</name>
    <name type="common">Human</name>
    <dbReference type="NCBI Taxonomy" id="9606"/>
    <lineage>
        <taxon>Eukaryota</taxon>
        <taxon>Metazoa</taxon>
        <taxon>Chordata</taxon>
        <taxon>Craniata</taxon>
        <taxon>Vertebrata</taxon>
        <taxon>Euteleostomi</taxon>
        <taxon>Mammalia</taxon>
        <taxon>Eutheria</taxon>
        <taxon>Euarchontoglires</taxon>
        <taxon>Primates</taxon>
        <taxon>Haplorrhini</taxon>
        <taxon>Catarrhini</taxon>
        <taxon>Hominidae</taxon>
        <taxon>Homo</taxon>
    </lineage>
</organism>
<feature type="chain" id="PRO_0000288782" description="Serine/threonine-protein phosphatase PGAM5, mitochondrial">
    <location>
        <begin position="1"/>
        <end position="289"/>
    </location>
</feature>
<feature type="topological domain" description="Mitochondrial matrix" evidence="13">
    <location>
        <begin position="1"/>
        <end position="6"/>
    </location>
</feature>
<feature type="transmembrane region" description="Helical" evidence="1">
    <location>
        <begin position="7"/>
        <end position="29"/>
    </location>
</feature>
<feature type="topological domain" description="Mitochondrial intermembrane" evidence="13">
    <location>
        <begin position="30"/>
        <end position="289"/>
    </location>
</feature>
<feature type="region of interest" description="Disordered" evidence="2">
    <location>
        <begin position="32"/>
        <end position="59"/>
    </location>
</feature>
<feature type="region of interest" description="Interaction with KEAP1">
    <location>
        <begin position="77"/>
        <end position="82"/>
    </location>
</feature>
<feature type="compositionally biased region" description="Low complexity" evidence="2">
    <location>
        <begin position="45"/>
        <end position="56"/>
    </location>
</feature>
<feature type="site" description="Cleavage; by PARL" evidence="7">
    <location>
        <begin position="24"/>
        <end position="25"/>
    </location>
</feature>
<feature type="modified residue" description="Phosphoserine" evidence="15 16">
    <location>
        <position position="80"/>
    </location>
</feature>
<feature type="modified residue" description="Phosphoserine" evidence="16">
    <location>
        <position position="87"/>
    </location>
</feature>
<feature type="modified residue" description="N6-acetyllysine" evidence="14">
    <location>
        <position position="116"/>
    </location>
</feature>
<feature type="modified residue" description="N6-acetyllysine" evidence="14">
    <location>
        <position position="144"/>
    </location>
</feature>
<feature type="modified residue" description="N6-acetyllysine" evidence="14">
    <location>
        <position position="191"/>
    </location>
</feature>
<feature type="splice variant" id="VSP_025761" description="In isoform 2." evidence="11">
    <original>RALQFPPEGWLRLSLNNGSITHLVIRPNGRVALRTLGDTGFMPPDKITRS</original>
    <variation>SIPPLLSAGDFVLLGS</variation>
    <location>
        <begin position="240"/>
        <end position="289"/>
    </location>
</feature>
<feature type="mutagenesis site" description="Abolishes cleavage by PARL." evidence="7">
    <original>S</original>
    <variation>F</variation>
    <location>
        <position position="24"/>
    </location>
</feature>
<feature type="mutagenesis site" description="Loss of interaction with KEAP1; when associated with A-80." evidence="3">
    <original>E</original>
    <variation>A</variation>
    <location>
        <position position="79"/>
    </location>
</feature>
<feature type="mutagenesis site" description="Loss of interaction with KEAP1; when associated with A-79." evidence="3">
    <original>S</original>
    <variation>A</variation>
    <location>
        <position position="80"/>
    </location>
</feature>
<feature type="mutagenesis site" description="Loss of phosphatase activity." evidence="5 10">
    <original>H</original>
    <variation>A</variation>
    <location>
        <position position="105"/>
    </location>
</feature>
<feature type="sequence conflict" description="In Ref. 3; AAK60627." evidence="12" ref="3">
    <original>G</original>
    <variation>C</variation>
    <location>
        <position position="124"/>
    </location>
</feature>
<feature type="helix" evidence="18">
    <location>
        <begin position="3"/>
        <end position="10"/>
    </location>
</feature>
<feature type="turn" evidence="18">
    <location>
        <begin position="11"/>
        <end position="14"/>
    </location>
</feature>
<feature type="strand" evidence="18">
    <location>
        <begin position="15"/>
        <end position="17"/>
    </location>
</feature>
<feature type="helix" evidence="18">
    <location>
        <begin position="18"/>
        <end position="26"/>
    </location>
</feature>
<feature type="turn" evidence="18">
    <location>
        <begin position="27"/>
        <end position="29"/>
    </location>
</feature>
<feature type="strand" evidence="17">
    <location>
        <begin position="98"/>
        <end position="104"/>
    </location>
</feature>
<feature type="helix" evidence="17">
    <location>
        <begin position="115"/>
        <end position="117"/>
    </location>
</feature>
<feature type="helix" evidence="17">
    <location>
        <begin position="122"/>
        <end position="136"/>
    </location>
</feature>
<feature type="strand" evidence="17">
    <location>
        <begin position="143"/>
        <end position="150"/>
    </location>
</feature>
<feature type="helix" evidence="17">
    <location>
        <begin position="151"/>
        <end position="162"/>
    </location>
</feature>
<feature type="strand" evidence="17">
    <location>
        <begin position="169"/>
        <end position="172"/>
    </location>
</feature>
<feature type="helix" evidence="17">
    <location>
        <begin position="173"/>
        <end position="175"/>
    </location>
</feature>
<feature type="helix" evidence="17">
    <location>
        <begin position="197"/>
        <end position="211"/>
    </location>
</feature>
<feature type="strand" evidence="17">
    <location>
        <begin position="223"/>
        <end position="229"/>
    </location>
</feature>
<feature type="helix" evidence="17">
    <location>
        <begin position="231"/>
        <end position="241"/>
    </location>
</feature>
<feature type="helix" evidence="17">
    <location>
        <begin position="246"/>
        <end position="251"/>
    </location>
</feature>
<feature type="strand" evidence="17">
    <location>
        <begin position="259"/>
        <end position="264"/>
    </location>
</feature>
<feature type="strand" evidence="17">
    <location>
        <begin position="270"/>
        <end position="277"/>
    </location>
</feature>
<feature type="helix" evidence="17">
    <location>
        <begin position="283"/>
        <end position="285"/>
    </location>
</feature>
<feature type="sequence conflict" description="In Ref. 2; AAH08196." evidence="12" ref="2">
    <original>L</original>
    <variation>V</variation>
    <location sequence="Q96HS1-2">
        <position position="252"/>
    </location>
</feature>
<gene>
    <name type="primary">PGAM5</name>
</gene>